<proteinExistence type="inferred from homology"/>
<name>CYAY_THISH</name>
<gene>
    <name evidence="1" type="primary">cyaY</name>
    <name type="ordered locus">Tgr7_1194</name>
</gene>
<comment type="function">
    <text evidence="1">Involved in iron-sulfur (Fe-S) cluster assembly. May act as a regulator of Fe-S biogenesis.</text>
</comment>
<comment type="similarity">
    <text evidence="1">Belongs to the frataxin family.</text>
</comment>
<dbReference type="EMBL" id="CP001339">
    <property type="protein sequence ID" value="ACL72280.1"/>
    <property type="molecule type" value="Genomic_DNA"/>
</dbReference>
<dbReference type="RefSeq" id="WP_012637763.1">
    <property type="nucleotide sequence ID" value="NC_011901.1"/>
</dbReference>
<dbReference type="SMR" id="B8GQ85"/>
<dbReference type="STRING" id="396588.Tgr7_1194"/>
<dbReference type="KEGG" id="tgr:Tgr7_1194"/>
<dbReference type="eggNOG" id="COG1965">
    <property type="taxonomic scope" value="Bacteria"/>
</dbReference>
<dbReference type="HOGENOM" id="CLU_080880_3_0_6"/>
<dbReference type="OrthoDB" id="285675at2"/>
<dbReference type="Proteomes" id="UP000002383">
    <property type="component" value="Chromosome"/>
</dbReference>
<dbReference type="GO" id="GO:0005737">
    <property type="term" value="C:cytoplasm"/>
    <property type="evidence" value="ECO:0007669"/>
    <property type="project" value="UniProtKB-ARBA"/>
</dbReference>
<dbReference type="GO" id="GO:0051537">
    <property type="term" value="F:2 iron, 2 sulfur cluster binding"/>
    <property type="evidence" value="ECO:0007669"/>
    <property type="project" value="TreeGrafter"/>
</dbReference>
<dbReference type="GO" id="GO:0008199">
    <property type="term" value="F:ferric iron binding"/>
    <property type="evidence" value="ECO:0007669"/>
    <property type="project" value="InterPro"/>
</dbReference>
<dbReference type="GO" id="GO:0008198">
    <property type="term" value="F:ferrous iron binding"/>
    <property type="evidence" value="ECO:0007669"/>
    <property type="project" value="TreeGrafter"/>
</dbReference>
<dbReference type="GO" id="GO:0004322">
    <property type="term" value="F:ferroxidase activity"/>
    <property type="evidence" value="ECO:0007669"/>
    <property type="project" value="TreeGrafter"/>
</dbReference>
<dbReference type="GO" id="GO:0034986">
    <property type="term" value="F:iron chaperone activity"/>
    <property type="evidence" value="ECO:0007669"/>
    <property type="project" value="TreeGrafter"/>
</dbReference>
<dbReference type="GO" id="GO:0006879">
    <property type="term" value="P:intracellular iron ion homeostasis"/>
    <property type="evidence" value="ECO:0007669"/>
    <property type="project" value="TreeGrafter"/>
</dbReference>
<dbReference type="GO" id="GO:0016226">
    <property type="term" value="P:iron-sulfur cluster assembly"/>
    <property type="evidence" value="ECO:0007669"/>
    <property type="project" value="UniProtKB-UniRule"/>
</dbReference>
<dbReference type="Gene3D" id="3.30.920.10">
    <property type="entry name" value="Frataxin/CyaY"/>
    <property type="match status" value="1"/>
</dbReference>
<dbReference type="HAMAP" id="MF_00142">
    <property type="entry name" value="CyaY"/>
    <property type="match status" value="1"/>
</dbReference>
<dbReference type="InterPro" id="IPR047584">
    <property type="entry name" value="CyaY"/>
</dbReference>
<dbReference type="InterPro" id="IPR002908">
    <property type="entry name" value="Frataxin/CyaY"/>
</dbReference>
<dbReference type="InterPro" id="IPR036524">
    <property type="entry name" value="Frataxin/CyaY_sf"/>
</dbReference>
<dbReference type="InterPro" id="IPR020895">
    <property type="entry name" value="Frataxin_CS"/>
</dbReference>
<dbReference type="NCBIfam" id="TIGR03421">
    <property type="entry name" value="FeS_CyaY"/>
    <property type="match status" value="1"/>
</dbReference>
<dbReference type="PANTHER" id="PTHR16821">
    <property type="entry name" value="FRATAXIN"/>
    <property type="match status" value="1"/>
</dbReference>
<dbReference type="PANTHER" id="PTHR16821:SF2">
    <property type="entry name" value="FRATAXIN, MITOCHONDRIAL"/>
    <property type="match status" value="1"/>
</dbReference>
<dbReference type="Pfam" id="PF01491">
    <property type="entry name" value="Frataxin_Cyay"/>
    <property type="match status" value="1"/>
</dbReference>
<dbReference type="SMART" id="SM01219">
    <property type="entry name" value="Frataxin_Cyay"/>
    <property type="match status" value="1"/>
</dbReference>
<dbReference type="SUPFAM" id="SSF55387">
    <property type="entry name" value="Frataxin/Nqo15-like"/>
    <property type="match status" value="1"/>
</dbReference>
<dbReference type="PROSITE" id="PS01344">
    <property type="entry name" value="FRATAXIN_1"/>
    <property type="match status" value="1"/>
</dbReference>
<dbReference type="PROSITE" id="PS50810">
    <property type="entry name" value="FRATAXIN_2"/>
    <property type="match status" value="1"/>
</dbReference>
<feature type="chain" id="PRO_1000123047" description="Iron-sulfur cluster assembly protein CyaY">
    <location>
        <begin position="1"/>
        <end position="107"/>
    </location>
</feature>
<accession>B8GQ85</accession>
<organism>
    <name type="scientific">Thioalkalivibrio sulfidiphilus (strain HL-EbGR7)</name>
    <dbReference type="NCBI Taxonomy" id="396588"/>
    <lineage>
        <taxon>Bacteria</taxon>
        <taxon>Pseudomonadati</taxon>
        <taxon>Pseudomonadota</taxon>
        <taxon>Gammaproteobacteria</taxon>
        <taxon>Chromatiales</taxon>
        <taxon>Ectothiorhodospiraceae</taxon>
        <taxon>Thioalkalivibrio</taxon>
    </lineage>
</organism>
<protein>
    <recommendedName>
        <fullName evidence="1">Iron-sulfur cluster assembly protein CyaY</fullName>
    </recommendedName>
</protein>
<sequence length="107" mass="11787">MADISFSLHAEQTLESLLERMSEFDALADLDMDIIDGVLTLEFDDGGKLILNRQEAASQIWLASPEGPAHFGYDADRDAWLNDRTGESLTDTLNRVLSAGCGETIRL</sequence>
<keyword id="KW-0408">Iron</keyword>
<keyword id="KW-0479">Metal-binding</keyword>
<keyword id="KW-1185">Reference proteome</keyword>
<evidence type="ECO:0000255" key="1">
    <source>
        <dbReference type="HAMAP-Rule" id="MF_00142"/>
    </source>
</evidence>
<reference key="1">
    <citation type="journal article" date="2011" name="Stand. Genomic Sci.">
        <title>Complete genome sequence of 'Thioalkalivibrio sulfidophilus' HL-EbGr7.</title>
        <authorList>
            <person name="Muyzer G."/>
            <person name="Sorokin D.Y."/>
            <person name="Mavromatis K."/>
            <person name="Lapidus A."/>
            <person name="Clum A."/>
            <person name="Ivanova N."/>
            <person name="Pati A."/>
            <person name="d'Haeseleer P."/>
            <person name="Woyke T."/>
            <person name="Kyrpides N.C."/>
        </authorList>
    </citation>
    <scope>NUCLEOTIDE SEQUENCE [LARGE SCALE GENOMIC DNA]</scope>
    <source>
        <strain>HL-EbGR7</strain>
    </source>
</reference>